<keyword id="KW-0175">Coiled coil</keyword>
<keyword id="KW-0472">Membrane</keyword>
<keyword id="KW-0576">Peroxisome</keyword>
<keyword id="KW-0653">Protein transport</keyword>
<keyword id="KW-1185">Reference proteome</keyword>
<keyword id="KW-0811">Translocation</keyword>
<keyword id="KW-0813">Transport</keyword>
<feature type="chain" id="PRO_0000372384" description="Peroxisomal membrane protein pex14">
    <location>
        <begin position="1"/>
        <end position="286"/>
    </location>
</feature>
<feature type="region of interest" description="Disordered" evidence="3">
    <location>
        <begin position="218"/>
        <end position="239"/>
    </location>
</feature>
<feature type="coiled-coil region" evidence="2">
    <location>
        <begin position="122"/>
        <end position="214"/>
    </location>
</feature>
<feature type="short sequence motif" description="SH3-binding" evidence="1">
    <location>
        <begin position="61"/>
        <end position="69"/>
    </location>
</feature>
<protein>
    <recommendedName>
        <fullName evidence="5">Peroxisomal membrane protein pex14</fullName>
    </recommendedName>
    <alternativeName>
        <fullName evidence="5">Peroxin-14</fullName>
    </alternativeName>
</protein>
<evidence type="ECO:0000250" key="1">
    <source>
        <dbReference type="UniProtKB" id="P53112"/>
    </source>
</evidence>
<evidence type="ECO:0000255" key="2"/>
<evidence type="ECO:0000256" key="3">
    <source>
        <dbReference type="SAM" id="MobiDB-lite"/>
    </source>
</evidence>
<evidence type="ECO:0000269" key="4">
    <source>
    </source>
</evidence>
<evidence type="ECO:0000305" key="5"/>
<proteinExistence type="inferred from homology"/>
<comment type="function">
    <text evidence="1">Component of the PEX13-PEX14 docking complex, a translocon channel that specifically mediates the import of peroxisomal cargo proteins bound to PEX5 receptor. The PEX13-PEX14 docking complex forms a large import pore which can be opened to a diameter of about 9 nm. Mechanistically, PEX5 receptor along with cargo proteins associates with the PEX14 subunit of the PEX13-PEX14 docking complex in the cytosol, leading to the insertion of the receptor into the organelle membrane with the concomitant translocation of the cargo into the peroxisome matrix.</text>
</comment>
<comment type="subunit">
    <text evidence="1">Interacts with PEX13 (via SH3 domain); forming the PEX13-PEX14 docking complex. Interacts with PEX5 (via WxxxF/Y motifs).</text>
</comment>
<comment type="subcellular location">
    <subcellularLocation>
        <location evidence="4">Peroxisome membrane</location>
        <topology evidence="1">Peripheral membrane protein</topology>
        <orientation evidence="1">Cytoplasmic side</orientation>
    </subcellularLocation>
</comment>
<comment type="similarity">
    <text evidence="5">Belongs to the peroxin-14 family.</text>
</comment>
<gene>
    <name type="primary">pex14</name>
    <name type="ORF">SPBC13G1.03c</name>
</gene>
<sequence length="286" mass="32814">MREDLLRNSVEFLREKTVLDAPDVKKIEFLKSKGLTAEEIQEAFKLAKNPLFPSYPRFENTSNFVSRDWRDWFIMGVISTGFAWSAYSLVKKYIAPMFRAPSQNAYEADKNALDAKFLEAHKILENLDEQTRKLSERTEKQQDELDIALDDLEETLNTLKRTSENRDREIARISQDVYTMSTITLPQSLEQIKKSQEEALQNLSREISSLRCLQTDSKKDDTFATTSNSSIPVLENPLDTSEGFQTKKVGTASLPDWQISMHNEASKNIDFNDIDPAESYVAEDAY</sequence>
<accession>O60065</accession>
<dbReference type="EMBL" id="CU329671">
    <property type="protein sequence ID" value="CAA18656.1"/>
    <property type="molecule type" value="Genomic_DNA"/>
</dbReference>
<dbReference type="PIR" id="T39404">
    <property type="entry name" value="T39404"/>
</dbReference>
<dbReference type="RefSeq" id="NP_596552.1">
    <property type="nucleotide sequence ID" value="NM_001022473.2"/>
</dbReference>
<dbReference type="SMR" id="O60065"/>
<dbReference type="BioGRID" id="276617">
    <property type="interactions" value="4"/>
</dbReference>
<dbReference type="FunCoup" id="O60065">
    <property type="interactions" value="22"/>
</dbReference>
<dbReference type="IntAct" id="O60065">
    <property type="interactions" value="1"/>
</dbReference>
<dbReference type="STRING" id="284812.O60065"/>
<dbReference type="iPTMnet" id="O60065"/>
<dbReference type="PaxDb" id="4896-SPBC13G1.03c.1"/>
<dbReference type="EnsemblFungi" id="SPBC13G1.03c.1">
    <property type="protein sequence ID" value="SPBC13G1.03c.1:pep"/>
    <property type="gene ID" value="SPBC13G1.03c"/>
</dbReference>
<dbReference type="GeneID" id="2540079"/>
<dbReference type="KEGG" id="spo:2540079"/>
<dbReference type="PomBase" id="SPBC13G1.03c">
    <property type="gene designation" value="pex14"/>
</dbReference>
<dbReference type="VEuPathDB" id="FungiDB:SPBC13G1.03c"/>
<dbReference type="eggNOG" id="KOG2629">
    <property type="taxonomic scope" value="Eukaryota"/>
</dbReference>
<dbReference type="HOGENOM" id="CLU_045718_1_0_1"/>
<dbReference type="InParanoid" id="O60065"/>
<dbReference type="OMA" id="YNQWQPP"/>
<dbReference type="PhylomeDB" id="O60065"/>
<dbReference type="Reactome" id="R-SPO-8866654">
    <property type="pathway name" value="E3 ubiquitin ligases ubiquitinate target proteins"/>
</dbReference>
<dbReference type="Reactome" id="R-SPO-9033241">
    <property type="pathway name" value="Peroxisomal protein import"/>
</dbReference>
<dbReference type="Reactome" id="R-SPO-9603798">
    <property type="pathway name" value="Class I peroxisomal membrane protein import"/>
</dbReference>
<dbReference type="PRO" id="PR:O60065"/>
<dbReference type="Proteomes" id="UP000002485">
    <property type="component" value="Chromosome II"/>
</dbReference>
<dbReference type="GO" id="GO:0005737">
    <property type="term" value="C:cytoplasm"/>
    <property type="evidence" value="ECO:0007005"/>
    <property type="project" value="PomBase"/>
</dbReference>
<dbReference type="GO" id="GO:1990429">
    <property type="term" value="C:peroxisomal importomer complex"/>
    <property type="evidence" value="ECO:0000318"/>
    <property type="project" value="GO_Central"/>
</dbReference>
<dbReference type="GO" id="GO:0005778">
    <property type="term" value="C:peroxisomal membrane"/>
    <property type="evidence" value="ECO:0000318"/>
    <property type="project" value="GO_Central"/>
</dbReference>
<dbReference type="GO" id="GO:0005777">
    <property type="term" value="C:peroxisome"/>
    <property type="evidence" value="ECO:0000314"/>
    <property type="project" value="PomBase"/>
</dbReference>
<dbReference type="GO" id="GO:0005102">
    <property type="term" value="F:signaling receptor binding"/>
    <property type="evidence" value="ECO:0000318"/>
    <property type="project" value="GO_Central"/>
</dbReference>
<dbReference type="GO" id="GO:0016560">
    <property type="term" value="P:protein import into peroxisome matrix, docking"/>
    <property type="evidence" value="ECO:0000318"/>
    <property type="project" value="GO_Central"/>
</dbReference>
<dbReference type="GO" id="GO:0006625">
    <property type="term" value="P:protein targeting to peroxisome"/>
    <property type="evidence" value="ECO:0000266"/>
    <property type="project" value="PomBase"/>
</dbReference>
<dbReference type="Gene3D" id="1.10.10.10">
    <property type="entry name" value="Winged helix-like DNA-binding domain superfamily/Winged helix DNA-binding domain"/>
    <property type="match status" value="1"/>
</dbReference>
<dbReference type="InterPro" id="IPR025655">
    <property type="entry name" value="PEX14"/>
</dbReference>
<dbReference type="InterPro" id="IPR006785">
    <property type="entry name" value="Pex14_N"/>
</dbReference>
<dbReference type="InterPro" id="IPR036388">
    <property type="entry name" value="WH-like_DNA-bd_sf"/>
</dbReference>
<dbReference type="PANTHER" id="PTHR23058">
    <property type="entry name" value="PEROXISOMAL MEMBRANE PROTEIN PEX14"/>
    <property type="match status" value="1"/>
</dbReference>
<dbReference type="PANTHER" id="PTHR23058:SF0">
    <property type="entry name" value="PEROXISOMAL MEMBRANE PROTEIN PEX14"/>
    <property type="match status" value="1"/>
</dbReference>
<dbReference type="Pfam" id="PF04695">
    <property type="entry name" value="Pex14_N"/>
    <property type="match status" value="1"/>
</dbReference>
<name>PEX14_SCHPO</name>
<reference key="1">
    <citation type="journal article" date="2002" name="Nature">
        <title>The genome sequence of Schizosaccharomyces pombe.</title>
        <authorList>
            <person name="Wood V."/>
            <person name="Gwilliam R."/>
            <person name="Rajandream M.A."/>
            <person name="Lyne M.H."/>
            <person name="Lyne R."/>
            <person name="Stewart A."/>
            <person name="Sgouros J.G."/>
            <person name="Peat N."/>
            <person name="Hayles J."/>
            <person name="Baker S.G."/>
            <person name="Basham D."/>
            <person name="Bowman S."/>
            <person name="Brooks K."/>
            <person name="Brown D."/>
            <person name="Brown S."/>
            <person name="Chillingworth T."/>
            <person name="Churcher C.M."/>
            <person name="Collins M."/>
            <person name="Connor R."/>
            <person name="Cronin A."/>
            <person name="Davis P."/>
            <person name="Feltwell T."/>
            <person name="Fraser A."/>
            <person name="Gentles S."/>
            <person name="Goble A."/>
            <person name="Hamlin N."/>
            <person name="Harris D.E."/>
            <person name="Hidalgo J."/>
            <person name="Hodgson G."/>
            <person name="Holroyd S."/>
            <person name="Hornsby T."/>
            <person name="Howarth S."/>
            <person name="Huckle E.J."/>
            <person name="Hunt S."/>
            <person name="Jagels K."/>
            <person name="James K.D."/>
            <person name="Jones L."/>
            <person name="Jones M."/>
            <person name="Leather S."/>
            <person name="McDonald S."/>
            <person name="McLean J."/>
            <person name="Mooney P."/>
            <person name="Moule S."/>
            <person name="Mungall K.L."/>
            <person name="Murphy L.D."/>
            <person name="Niblett D."/>
            <person name="Odell C."/>
            <person name="Oliver K."/>
            <person name="O'Neil S."/>
            <person name="Pearson D."/>
            <person name="Quail M.A."/>
            <person name="Rabbinowitsch E."/>
            <person name="Rutherford K.M."/>
            <person name="Rutter S."/>
            <person name="Saunders D."/>
            <person name="Seeger K."/>
            <person name="Sharp S."/>
            <person name="Skelton J."/>
            <person name="Simmonds M.N."/>
            <person name="Squares R."/>
            <person name="Squares S."/>
            <person name="Stevens K."/>
            <person name="Taylor K."/>
            <person name="Taylor R.G."/>
            <person name="Tivey A."/>
            <person name="Walsh S.V."/>
            <person name="Warren T."/>
            <person name="Whitehead S."/>
            <person name="Woodward J.R."/>
            <person name="Volckaert G."/>
            <person name="Aert R."/>
            <person name="Robben J."/>
            <person name="Grymonprez B."/>
            <person name="Weltjens I."/>
            <person name="Vanstreels E."/>
            <person name="Rieger M."/>
            <person name="Schaefer M."/>
            <person name="Mueller-Auer S."/>
            <person name="Gabel C."/>
            <person name="Fuchs M."/>
            <person name="Duesterhoeft A."/>
            <person name="Fritzc C."/>
            <person name="Holzer E."/>
            <person name="Moestl D."/>
            <person name="Hilbert H."/>
            <person name="Borzym K."/>
            <person name="Langer I."/>
            <person name="Beck A."/>
            <person name="Lehrach H."/>
            <person name="Reinhardt R."/>
            <person name="Pohl T.M."/>
            <person name="Eger P."/>
            <person name="Zimmermann W."/>
            <person name="Wedler H."/>
            <person name="Wambutt R."/>
            <person name="Purnelle B."/>
            <person name="Goffeau A."/>
            <person name="Cadieu E."/>
            <person name="Dreano S."/>
            <person name="Gloux S."/>
            <person name="Lelaure V."/>
            <person name="Mottier S."/>
            <person name="Galibert F."/>
            <person name="Aves S.J."/>
            <person name="Xiang Z."/>
            <person name="Hunt C."/>
            <person name="Moore K."/>
            <person name="Hurst S.M."/>
            <person name="Lucas M."/>
            <person name="Rochet M."/>
            <person name="Gaillardin C."/>
            <person name="Tallada V.A."/>
            <person name="Garzon A."/>
            <person name="Thode G."/>
            <person name="Daga R.R."/>
            <person name="Cruzado L."/>
            <person name="Jimenez J."/>
            <person name="Sanchez M."/>
            <person name="del Rey F."/>
            <person name="Benito J."/>
            <person name="Dominguez A."/>
            <person name="Revuelta J.L."/>
            <person name="Moreno S."/>
            <person name="Armstrong J."/>
            <person name="Forsburg S.L."/>
            <person name="Cerutti L."/>
            <person name="Lowe T."/>
            <person name="McCombie W.R."/>
            <person name="Paulsen I."/>
            <person name="Potashkin J."/>
            <person name="Shpakovski G.V."/>
            <person name="Ussery D."/>
            <person name="Barrell B.G."/>
            <person name="Nurse P."/>
        </authorList>
    </citation>
    <scope>NUCLEOTIDE SEQUENCE [LARGE SCALE GENOMIC DNA]</scope>
    <source>
        <strain>972 / ATCC 24843</strain>
    </source>
</reference>
<reference key="2">
    <citation type="journal article" date="2006" name="Nat. Biotechnol.">
        <title>ORFeome cloning and global analysis of protein localization in the fission yeast Schizosaccharomyces pombe.</title>
        <authorList>
            <person name="Matsuyama A."/>
            <person name="Arai R."/>
            <person name="Yashiroda Y."/>
            <person name="Shirai A."/>
            <person name="Kamata A."/>
            <person name="Sekido S."/>
            <person name="Kobayashi Y."/>
            <person name="Hashimoto A."/>
            <person name="Hamamoto M."/>
            <person name="Hiraoka Y."/>
            <person name="Horinouchi S."/>
            <person name="Yoshida M."/>
        </authorList>
    </citation>
    <scope>SUBCELLULAR LOCATION [LARGE SCALE ANALYSIS]</scope>
</reference>
<organism>
    <name type="scientific">Schizosaccharomyces pombe (strain 972 / ATCC 24843)</name>
    <name type="common">Fission yeast</name>
    <dbReference type="NCBI Taxonomy" id="284812"/>
    <lineage>
        <taxon>Eukaryota</taxon>
        <taxon>Fungi</taxon>
        <taxon>Dikarya</taxon>
        <taxon>Ascomycota</taxon>
        <taxon>Taphrinomycotina</taxon>
        <taxon>Schizosaccharomycetes</taxon>
        <taxon>Schizosaccharomycetales</taxon>
        <taxon>Schizosaccharomycetaceae</taxon>
        <taxon>Schizosaccharomyces</taxon>
    </lineage>
</organism>